<feature type="chain" id="PRO_0000336101" description="Proline-rich protein 32">
    <location>
        <begin position="1"/>
        <end position="295"/>
    </location>
</feature>
<feature type="region of interest" description="Disordered" evidence="1">
    <location>
        <begin position="10"/>
        <end position="48"/>
    </location>
</feature>
<feature type="region of interest" description="Disordered" evidence="1">
    <location>
        <begin position="101"/>
        <end position="120"/>
    </location>
</feature>
<evidence type="ECO:0000256" key="1">
    <source>
        <dbReference type="SAM" id="MobiDB-lite"/>
    </source>
</evidence>
<name>PRR32_BOVIN</name>
<reference key="1">
    <citation type="submission" date="2007-06" db="EMBL/GenBank/DDBJ databases">
        <authorList>
            <consortium name="NIH - Mammalian Gene Collection (MGC) project"/>
        </authorList>
    </citation>
    <scope>NUCLEOTIDE SEQUENCE [LARGE SCALE MRNA]</scope>
    <source>
        <strain>Hereford</strain>
        <tissue>Fetal muscle</tissue>
    </source>
</reference>
<keyword id="KW-1185">Reference proteome</keyword>
<protein>
    <recommendedName>
        <fullName>Proline-rich protein 32</fullName>
    </recommendedName>
</protein>
<accession>A5PJK7</accession>
<organism>
    <name type="scientific">Bos taurus</name>
    <name type="common">Bovine</name>
    <dbReference type="NCBI Taxonomy" id="9913"/>
    <lineage>
        <taxon>Eukaryota</taxon>
        <taxon>Metazoa</taxon>
        <taxon>Chordata</taxon>
        <taxon>Craniata</taxon>
        <taxon>Vertebrata</taxon>
        <taxon>Euteleostomi</taxon>
        <taxon>Mammalia</taxon>
        <taxon>Eutheria</taxon>
        <taxon>Laurasiatheria</taxon>
        <taxon>Artiodactyla</taxon>
        <taxon>Ruminantia</taxon>
        <taxon>Pecora</taxon>
        <taxon>Bovidae</taxon>
        <taxon>Bovinae</taxon>
        <taxon>Bos</taxon>
    </lineage>
</organism>
<gene>
    <name type="primary">PRR32</name>
</gene>
<proteinExistence type="evidence at transcript level"/>
<dbReference type="EMBL" id="BC142150">
    <property type="protein sequence ID" value="AAI42151.1"/>
    <property type="molecule type" value="mRNA"/>
</dbReference>
<dbReference type="RefSeq" id="NP_001092658.1">
    <property type="nucleotide sequence ID" value="NM_001099188.1"/>
</dbReference>
<dbReference type="STRING" id="9913.ENSBTAP00000011543"/>
<dbReference type="PaxDb" id="9913-ENSBTAP00000011543"/>
<dbReference type="Ensembl" id="ENSBTAT00000011543.5">
    <property type="protein sequence ID" value="ENSBTAP00000011543.3"/>
    <property type="gene ID" value="ENSBTAG00000008763.6"/>
</dbReference>
<dbReference type="GeneID" id="783116"/>
<dbReference type="KEGG" id="bta:783116"/>
<dbReference type="CTD" id="100130613"/>
<dbReference type="VEuPathDB" id="HostDB:ENSBTAG00000008763"/>
<dbReference type="VGNC" id="VGNC:33398">
    <property type="gene designation" value="PRR32"/>
</dbReference>
<dbReference type="eggNOG" id="ENOG502T9EE">
    <property type="taxonomic scope" value="Eukaryota"/>
</dbReference>
<dbReference type="GeneTree" id="ENSGT00390000012726"/>
<dbReference type="HOGENOM" id="CLU_933713_0_0_1"/>
<dbReference type="InParanoid" id="A5PJK7"/>
<dbReference type="OMA" id="HCFIPPR"/>
<dbReference type="OrthoDB" id="9802133at2759"/>
<dbReference type="TreeFam" id="TF338131"/>
<dbReference type="Proteomes" id="UP000009136">
    <property type="component" value="Chromosome X"/>
</dbReference>
<dbReference type="Bgee" id="ENSBTAG00000008763">
    <property type="expression patterns" value="Expressed in laryngeal cartilage and 22 other cell types or tissues"/>
</dbReference>
<dbReference type="InterPro" id="IPR027891">
    <property type="entry name" value="DUF4645"/>
</dbReference>
<dbReference type="PANTHER" id="PTHR37343">
    <property type="entry name" value="PROLINE-RICH PROTEIN 32"/>
    <property type="match status" value="1"/>
</dbReference>
<dbReference type="PANTHER" id="PTHR37343:SF1">
    <property type="entry name" value="PROLINE-RICH PROTEIN 32"/>
    <property type="match status" value="1"/>
</dbReference>
<dbReference type="Pfam" id="PF15488">
    <property type="entry name" value="DUF4645"/>
    <property type="match status" value="1"/>
</dbReference>
<sequence>MACIENVLGGHAPSPTAVAAAENGNREPRPSLPFQCPKDDAGSWGHPGVPLRPPFKVLSDLARERLERPSERTGSCIPVDGWRALKPPYGPPPAVAEEPLATGEVNSSEGPAGWRQSGQDSINNVSQEFSGSPPALMVGGTKVSNGGTERGGSNAGLYVALPRGQGFFPSRGPQVRGPTHISTLRSGIMMELPPGSTRVTGKERLARVSFPLGGPRHPVKNWPRPMPLASSTTGLGSRTTAHCFIPPRPPSFNPFLAMPMAFAPPPIFGPPLPSCFADFPSWGMPAPASSNRENN</sequence>